<feature type="signal peptide">
    <location>
        <begin position="1"/>
        <end position="23"/>
    </location>
</feature>
<feature type="chain" id="PRO_0000022331" description="Salivary glue protein Sgs-3">
    <location>
        <begin position="24"/>
        <end position="273"/>
    </location>
</feature>
<feature type="region of interest" description="Disordered" evidence="1">
    <location>
        <begin position="47"/>
        <end position="225"/>
    </location>
</feature>
<feature type="compositionally biased region" description="Low complexity" evidence="1">
    <location>
        <begin position="47"/>
        <end position="57"/>
    </location>
</feature>
<feature type="compositionally biased region" description="Pro residues" evidence="1">
    <location>
        <begin position="58"/>
        <end position="67"/>
    </location>
</feature>
<feature type="compositionally biased region" description="Low complexity" evidence="1">
    <location>
        <begin position="83"/>
        <end position="225"/>
    </location>
</feature>
<evidence type="ECO:0000256" key="1">
    <source>
        <dbReference type="SAM" id="MobiDB-lite"/>
    </source>
</evidence>
<reference key="1">
    <citation type="journal article" date="1988" name="J. Mol. Biol.">
        <title>Evolution and expression of the Sgs-3 glue gene of Drosophila.</title>
        <authorList>
            <person name="Martin C.H."/>
            <person name="Mayeda C.A."/>
            <person name="Meyerowitz E.M."/>
        </authorList>
    </citation>
    <scope>NUCLEOTIDE SEQUENCE [GENOMIC DNA]</scope>
</reference>
<reference key="2">
    <citation type="journal article" date="2007" name="Nature">
        <title>Evolution of genes and genomes on the Drosophila phylogeny.</title>
        <authorList>
            <consortium name="Drosophila 12 genomes consortium"/>
        </authorList>
    </citation>
    <scope>NUCLEOTIDE SEQUENCE [LARGE SCALE GENOMIC DNA]</scope>
    <source>
        <strain>Tai18E2 / Tucson 14021-0261.01</strain>
    </source>
</reference>
<accession>P13728</accession>
<accession>B4PF55</accession>
<comment type="developmental stage">
    <text>Produced by third-instar larvae.</text>
</comment>
<organism>
    <name type="scientific">Drosophila yakuba</name>
    <name type="common">Fruit fly</name>
    <dbReference type="NCBI Taxonomy" id="7245"/>
    <lineage>
        <taxon>Eukaryota</taxon>
        <taxon>Metazoa</taxon>
        <taxon>Ecdysozoa</taxon>
        <taxon>Arthropoda</taxon>
        <taxon>Hexapoda</taxon>
        <taxon>Insecta</taxon>
        <taxon>Pterygota</taxon>
        <taxon>Neoptera</taxon>
        <taxon>Endopterygota</taxon>
        <taxon>Diptera</taxon>
        <taxon>Brachycera</taxon>
        <taxon>Muscomorpha</taxon>
        <taxon>Ephydroidea</taxon>
        <taxon>Drosophilidae</taxon>
        <taxon>Drosophila</taxon>
        <taxon>Sophophora</taxon>
    </lineage>
</organism>
<sequence length="273" mass="29500">MKLTIAISLASILLLSVAHVAQGCDCGCPTTSPKPCQTTVPTCAPTTTTTTTTTCAPPTRPPPPPCTDAPTTTKRTTEKSTTRRTTTTTRQTTTRPTTTTTTTTTTRRPTTRSTTTRHTTTTTTTTRRPTTTTTTTRRPTTTTTTTRRPTTTTTTTRRPTTTTTTTRLPTTRSTTTRQTTKSTTSKRPTHETTTTSKRPTQETTTTTRRATQATTTPKPTNKPGCGCKSCGPGGIPCGSCPKRQGLCTELNNLLRQLERRVRECVCGQPVWLL</sequence>
<gene>
    <name type="primary">Sgs3</name>
    <name type="ORF">GE21820</name>
</gene>
<proteinExistence type="evidence at transcript level"/>
<keyword id="KW-0677">Repeat</keyword>
<keyword id="KW-0732">Signal</keyword>
<protein>
    <recommendedName>
        <fullName>Salivary glue protein Sgs-3</fullName>
    </recommendedName>
</protein>
<name>SGS3_DROYA</name>
<dbReference type="EMBL" id="CM000159">
    <property type="protein sequence ID" value="EDW94137.1"/>
    <property type="molecule type" value="Genomic_DNA"/>
</dbReference>
<dbReference type="PIR" id="S01360">
    <property type="entry name" value="S01360"/>
</dbReference>
<dbReference type="RefSeq" id="XP_002094425.2">
    <property type="nucleotide sequence ID" value="XM_002094389.2"/>
</dbReference>
<dbReference type="EnsemblMetazoa" id="XM_039374624.2">
    <property type="protein sequence ID" value="XP_039230558.1"/>
    <property type="gene ID" value="LOC6533720"/>
</dbReference>
<dbReference type="KEGG" id="dya:Dyak_GE21820"/>
<dbReference type="eggNOG" id="ENOG502TF7P">
    <property type="taxonomic scope" value="Eukaryota"/>
</dbReference>
<dbReference type="HOGENOM" id="CLU_834891_0_0_1"/>
<dbReference type="OMA" id="MKTTVAC"/>
<dbReference type="ChiTaRS" id="Sgs3">
    <property type="organism name" value="fly"/>
</dbReference>
<dbReference type="Proteomes" id="UP000002282">
    <property type="component" value="Chromosome 3L"/>
</dbReference>